<keyword id="KW-0067">ATP-binding</keyword>
<keyword id="KW-0173">Coenzyme A biosynthesis</keyword>
<keyword id="KW-0963">Cytoplasm</keyword>
<keyword id="KW-0418">Kinase</keyword>
<keyword id="KW-0547">Nucleotide-binding</keyword>
<keyword id="KW-1185">Reference proteome</keyword>
<keyword id="KW-0808">Transferase</keyword>
<sequence length="216" mass="24044">MMSAEPRTVSTPAPSTPIIGVIGPPCSGKSTVARHLESLGGVWLNADEIAKSQLSDSAVIGELKSLFGDSIQMADCSLSRSRLADLVFGDDEASHARLRQLEGILHPRTRKILQSEIAKAKSERRPFVILDVPLLLESGYRDTCDEVWCLQVNPDRHQQLLASRGWNTEELERRSARQWSWKRKQSASTRVISNNGTEEELRRLVESELASVLQSK</sequence>
<name>COAE_RHOBA</name>
<reference key="1">
    <citation type="journal article" date="2003" name="Proc. Natl. Acad. Sci. U.S.A.">
        <title>Complete genome sequence of the marine planctomycete Pirellula sp. strain 1.</title>
        <authorList>
            <person name="Gloeckner F.O."/>
            <person name="Kube M."/>
            <person name="Bauer M."/>
            <person name="Teeling H."/>
            <person name="Lombardot T."/>
            <person name="Ludwig W."/>
            <person name="Gade D."/>
            <person name="Beck A."/>
            <person name="Borzym K."/>
            <person name="Heitmann K."/>
            <person name="Rabus R."/>
            <person name="Schlesner H."/>
            <person name="Amann R."/>
            <person name="Reinhardt R."/>
        </authorList>
    </citation>
    <scope>NUCLEOTIDE SEQUENCE [LARGE SCALE GENOMIC DNA]</scope>
    <source>
        <strain>DSM 10527 / NCIMB 13988 / SH1</strain>
    </source>
</reference>
<protein>
    <recommendedName>
        <fullName evidence="1">Dephospho-CoA kinase</fullName>
        <ecNumber evidence="1">2.7.1.24</ecNumber>
    </recommendedName>
    <alternativeName>
        <fullName evidence="1">Dephosphocoenzyme A kinase</fullName>
    </alternativeName>
</protein>
<feature type="chain" id="PRO_0000172989" description="Dephospho-CoA kinase">
    <location>
        <begin position="1"/>
        <end position="216"/>
    </location>
</feature>
<feature type="domain" description="DPCK" evidence="1">
    <location>
        <begin position="18"/>
        <end position="216"/>
    </location>
</feature>
<feature type="binding site" evidence="1">
    <location>
        <begin position="26"/>
        <end position="31"/>
    </location>
    <ligand>
        <name>ATP</name>
        <dbReference type="ChEBI" id="CHEBI:30616"/>
    </ligand>
</feature>
<proteinExistence type="inferred from homology"/>
<gene>
    <name evidence="1" type="primary">coaE</name>
    <name type="ordered locus">RB6607</name>
</gene>
<evidence type="ECO:0000255" key="1">
    <source>
        <dbReference type="HAMAP-Rule" id="MF_00376"/>
    </source>
</evidence>
<dbReference type="EC" id="2.7.1.24" evidence="1"/>
<dbReference type="EMBL" id="BX294144">
    <property type="protein sequence ID" value="CAD74904.1"/>
    <property type="molecule type" value="Genomic_DNA"/>
</dbReference>
<dbReference type="RefSeq" id="NP_867358.1">
    <property type="nucleotide sequence ID" value="NC_005027.1"/>
</dbReference>
<dbReference type="SMR" id="Q7UQ02"/>
<dbReference type="FunCoup" id="Q7UQ02">
    <property type="interactions" value="411"/>
</dbReference>
<dbReference type="STRING" id="243090.RB6607"/>
<dbReference type="EnsemblBacteria" id="CAD74904">
    <property type="protein sequence ID" value="CAD74904"/>
    <property type="gene ID" value="RB6607"/>
</dbReference>
<dbReference type="KEGG" id="rba:RB6607"/>
<dbReference type="PATRIC" id="fig|243090.15.peg.3200"/>
<dbReference type="eggNOG" id="COG0237">
    <property type="taxonomic scope" value="Bacteria"/>
</dbReference>
<dbReference type="HOGENOM" id="CLU_057180_0_1_0"/>
<dbReference type="InParanoid" id="Q7UQ02"/>
<dbReference type="OrthoDB" id="9812943at2"/>
<dbReference type="UniPathway" id="UPA00241">
    <property type="reaction ID" value="UER00356"/>
</dbReference>
<dbReference type="Proteomes" id="UP000001025">
    <property type="component" value="Chromosome"/>
</dbReference>
<dbReference type="GO" id="GO:0005737">
    <property type="term" value="C:cytoplasm"/>
    <property type="evidence" value="ECO:0007669"/>
    <property type="project" value="UniProtKB-SubCell"/>
</dbReference>
<dbReference type="GO" id="GO:0005524">
    <property type="term" value="F:ATP binding"/>
    <property type="evidence" value="ECO:0007669"/>
    <property type="project" value="UniProtKB-UniRule"/>
</dbReference>
<dbReference type="GO" id="GO:0004140">
    <property type="term" value="F:dephospho-CoA kinase activity"/>
    <property type="evidence" value="ECO:0000318"/>
    <property type="project" value="GO_Central"/>
</dbReference>
<dbReference type="GO" id="GO:0015937">
    <property type="term" value="P:coenzyme A biosynthetic process"/>
    <property type="evidence" value="ECO:0000318"/>
    <property type="project" value="GO_Central"/>
</dbReference>
<dbReference type="CDD" id="cd02022">
    <property type="entry name" value="DPCK"/>
    <property type="match status" value="1"/>
</dbReference>
<dbReference type="Gene3D" id="3.40.50.300">
    <property type="entry name" value="P-loop containing nucleotide triphosphate hydrolases"/>
    <property type="match status" value="1"/>
</dbReference>
<dbReference type="HAMAP" id="MF_00376">
    <property type="entry name" value="Dephospho_CoA_kinase"/>
    <property type="match status" value="1"/>
</dbReference>
<dbReference type="InterPro" id="IPR001977">
    <property type="entry name" value="Depp_CoAkinase"/>
</dbReference>
<dbReference type="InterPro" id="IPR027417">
    <property type="entry name" value="P-loop_NTPase"/>
</dbReference>
<dbReference type="NCBIfam" id="TIGR00152">
    <property type="entry name" value="dephospho-CoA kinase"/>
    <property type="match status" value="1"/>
</dbReference>
<dbReference type="PANTHER" id="PTHR10695:SF46">
    <property type="entry name" value="BIFUNCTIONAL COENZYME A SYNTHASE-RELATED"/>
    <property type="match status" value="1"/>
</dbReference>
<dbReference type="PANTHER" id="PTHR10695">
    <property type="entry name" value="DEPHOSPHO-COA KINASE-RELATED"/>
    <property type="match status" value="1"/>
</dbReference>
<dbReference type="Pfam" id="PF01121">
    <property type="entry name" value="CoaE"/>
    <property type="match status" value="1"/>
</dbReference>
<dbReference type="SUPFAM" id="SSF52540">
    <property type="entry name" value="P-loop containing nucleoside triphosphate hydrolases"/>
    <property type="match status" value="1"/>
</dbReference>
<dbReference type="PROSITE" id="PS51219">
    <property type="entry name" value="DPCK"/>
    <property type="match status" value="1"/>
</dbReference>
<comment type="function">
    <text evidence="1">Catalyzes the phosphorylation of the 3'-hydroxyl group of dephosphocoenzyme A to form coenzyme A.</text>
</comment>
<comment type="catalytic activity">
    <reaction evidence="1">
        <text>3'-dephospho-CoA + ATP = ADP + CoA + H(+)</text>
        <dbReference type="Rhea" id="RHEA:18245"/>
        <dbReference type="ChEBI" id="CHEBI:15378"/>
        <dbReference type="ChEBI" id="CHEBI:30616"/>
        <dbReference type="ChEBI" id="CHEBI:57287"/>
        <dbReference type="ChEBI" id="CHEBI:57328"/>
        <dbReference type="ChEBI" id="CHEBI:456216"/>
        <dbReference type="EC" id="2.7.1.24"/>
    </reaction>
</comment>
<comment type="pathway">
    <text evidence="1">Cofactor biosynthesis; coenzyme A biosynthesis; CoA from (R)-pantothenate: step 5/5.</text>
</comment>
<comment type="subcellular location">
    <subcellularLocation>
        <location evidence="1">Cytoplasm</location>
    </subcellularLocation>
</comment>
<comment type="similarity">
    <text evidence="1">Belongs to the CoaE family.</text>
</comment>
<organism>
    <name type="scientific">Rhodopirellula baltica (strain DSM 10527 / NCIMB 13988 / SH1)</name>
    <dbReference type="NCBI Taxonomy" id="243090"/>
    <lineage>
        <taxon>Bacteria</taxon>
        <taxon>Pseudomonadati</taxon>
        <taxon>Planctomycetota</taxon>
        <taxon>Planctomycetia</taxon>
        <taxon>Pirellulales</taxon>
        <taxon>Pirellulaceae</taxon>
        <taxon>Rhodopirellula</taxon>
    </lineage>
</organism>
<accession>Q7UQ02</accession>